<feature type="chain" id="PRO_1000090302" description="Holliday junction branch migration complex subunit RuvA">
    <location>
        <begin position="1"/>
        <end position="198"/>
    </location>
</feature>
<feature type="region of interest" description="Domain I" evidence="1">
    <location>
        <begin position="1"/>
        <end position="64"/>
    </location>
</feature>
<feature type="region of interest" description="Domain II" evidence="1">
    <location>
        <begin position="65"/>
        <end position="143"/>
    </location>
</feature>
<feature type="region of interest" description="Flexible linker" evidence="1">
    <location>
        <begin position="144"/>
        <end position="154"/>
    </location>
</feature>
<feature type="region of interest" description="Domain III" evidence="1">
    <location>
        <begin position="154"/>
        <end position="198"/>
    </location>
</feature>
<evidence type="ECO:0000255" key="1">
    <source>
        <dbReference type="HAMAP-Rule" id="MF_00031"/>
    </source>
</evidence>
<keyword id="KW-0963">Cytoplasm</keyword>
<keyword id="KW-0227">DNA damage</keyword>
<keyword id="KW-0233">DNA recombination</keyword>
<keyword id="KW-0234">DNA repair</keyword>
<keyword id="KW-0238">DNA-binding</keyword>
<accession>B2V337</accession>
<name>RUVA_CLOBA</name>
<proteinExistence type="inferred from homology"/>
<comment type="function">
    <text evidence="1">The RuvA-RuvB-RuvC complex processes Holliday junction (HJ) DNA during genetic recombination and DNA repair, while the RuvA-RuvB complex plays an important role in the rescue of blocked DNA replication forks via replication fork reversal (RFR). RuvA specifically binds to HJ cruciform DNA, conferring on it an open structure. The RuvB hexamer acts as an ATP-dependent pump, pulling dsDNA into and through the RuvAB complex. HJ branch migration allows RuvC to scan DNA until it finds its consensus sequence, where it cleaves and resolves the cruciform DNA.</text>
</comment>
<comment type="subunit">
    <text evidence="1">Homotetramer. Forms an RuvA(8)-RuvB(12)-Holliday junction (HJ) complex. HJ DNA is sandwiched between 2 RuvA tetramers; dsDNA enters through RuvA and exits via RuvB. An RuvB hexamer assembles on each DNA strand where it exits the tetramer. Each RuvB hexamer is contacted by two RuvA subunits (via domain III) on 2 adjacent RuvB subunits; this complex drives branch migration. In the full resolvosome a probable DNA-RuvA(4)-RuvB(12)-RuvC(2) complex forms which resolves the HJ.</text>
</comment>
<comment type="subcellular location">
    <subcellularLocation>
        <location evidence="1">Cytoplasm</location>
    </subcellularLocation>
</comment>
<comment type="domain">
    <text evidence="1">Has three domains with a flexible linker between the domains II and III and assumes an 'L' shape. Domain III is highly mobile and contacts RuvB.</text>
</comment>
<comment type="similarity">
    <text evidence="1">Belongs to the RuvA family.</text>
</comment>
<dbReference type="EMBL" id="CP001078">
    <property type="protein sequence ID" value="ACD53585.1"/>
    <property type="molecule type" value="Genomic_DNA"/>
</dbReference>
<dbReference type="RefSeq" id="WP_003372052.1">
    <property type="nucleotide sequence ID" value="NC_010723.1"/>
</dbReference>
<dbReference type="SMR" id="B2V337"/>
<dbReference type="KEGG" id="cbt:CLH_0956"/>
<dbReference type="HOGENOM" id="CLU_087936_3_0_9"/>
<dbReference type="GO" id="GO:0005737">
    <property type="term" value="C:cytoplasm"/>
    <property type="evidence" value="ECO:0007669"/>
    <property type="project" value="UniProtKB-SubCell"/>
</dbReference>
<dbReference type="GO" id="GO:0009379">
    <property type="term" value="C:Holliday junction helicase complex"/>
    <property type="evidence" value="ECO:0007669"/>
    <property type="project" value="InterPro"/>
</dbReference>
<dbReference type="GO" id="GO:0048476">
    <property type="term" value="C:Holliday junction resolvase complex"/>
    <property type="evidence" value="ECO:0007669"/>
    <property type="project" value="UniProtKB-UniRule"/>
</dbReference>
<dbReference type="GO" id="GO:0005524">
    <property type="term" value="F:ATP binding"/>
    <property type="evidence" value="ECO:0007669"/>
    <property type="project" value="InterPro"/>
</dbReference>
<dbReference type="GO" id="GO:0000400">
    <property type="term" value="F:four-way junction DNA binding"/>
    <property type="evidence" value="ECO:0007669"/>
    <property type="project" value="UniProtKB-UniRule"/>
</dbReference>
<dbReference type="GO" id="GO:0009378">
    <property type="term" value="F:four-way junction helicase activity"/>
    <property type="evidence" value="ECO:0007669"/>
    <property type="project" value="InterPro"/>
</dbReference>
<dbReference type="GO" id="GO:0006310">
    <property type="term" value="P:DNA recombination"/>
    <property type="evidence" value="ECO:0007669"/>
    <property type="project" value="UniProtKB-UniRule"/>
</dbReference>
<dbReference type="GO" id="GO:0006281">
    <property type="term" value="P:DNA repair"/>
    <property type="evidence" value="ECO:0007669"/>
    <property type="project" value="UniProtKB-UniRule"/>
</dbReference>
<dbReference type="CDD" id="cd14332">
    <property type="entry name" value="UBA_RuvA_C"/>
    <property type="match status" value="1"/>
</dbReference>
<dbReference type="Gene3D" id="1.10.150.20">
    <property type="entry name" value="5' to 3' exonuclease, C-terminal subdomain"/>
    <property type="match status" value="1"/>
</dbReference>
<dbReference type="Gene3D" id="1.10.8.10">
    <property type="entry name" value="DNA helicase RuvA subunit, C-terminal domain"/>
    <property type="match status" value="1"/>
</dbReference>
<dbReference type="Gene3D" id="2.40.50.140">
    <property type="entry name" value="Nucleic acid-binding proteins"/>
    <property type="match status" value="1"/>
</dbReference>
<dbReference type="HAMAP" id="MF_00031">
    <property type="entry name" value="DNA_HJ_migration_RuvA"/>
    <property type="match status" value="1"/>
</dbReference>
<dbReference type="InterPro" id="IPR013849">
    <property type="entry name" value="DNA_helicase_Holl-junc_RuvA_I"/>
</dbReference>
<dbReference type="InterPro" id="IPR012340">
    <property type="entry name" value="NA-bd_OB-fold"/>
</dbReference>
<dbReference type="InterPro" id="IPR000085">
    <property type="entry name" value="RuvA"/>
</dbReference>
<dbReference type="InterPro" id="IPR010994">
    <property type="entry name" value="RuvA_2-like"/>
</dbReference>
<dbReference type="InterPro" id="IPR011114">
    <property type="entry name" value="RuvA_C"/>
</dbReference>
<dbReference type="InterPro" id="IPR036267">
    <property type="entry name" value="RuvA_C_sf"/>
</dbReference>
<dbReference type="NCBIfam" id="TIGR00084">
    <property type="entry name" value="ruvA"/>
    <property type="match status" value="1"/>
</dbReference>
<dbReference type="Pfam" id="PF14520">
    <property type="entry name" value="HHH_5"/>
    <property type="match status" value="1"/>
</dbReference>
<dbReference type="Pfam" id="PF07499">
    <property type="entry name" value="RuvA_C"/>
    <property type="match status" value="1"/>
</dbReference>
<dbReference type="Pfam" id="PF01330">
    <property type="entry name" value="RuvA_N"/>
    <property type="match status" value="1"/>
</dbReference>
<dbReference type="SUPFAM" id="SSF46929">
    <property type="entry name" value="DNA helicase RuvA subunit, C-terminal domain"/>
    <property type="match status" value="1"/>
</dbReference>
<dbReference type="SUPFAM" id="SSF50249">
    <property type="entry name" value="Nucleic acid-binding proteins"/>
    <property type="match status" value="1"/>
</dbReference>
<dbReference type="SUPFAM" id="SSF47781">
    <property type="entry name" value="RuvA domain 2-like"/>
    <property type="match status" value="1"/>
</dbReference>
<sequence length="198" mass="21953">MYEYIKGEYMGINKDYIIIENNGIGYKIFTSGATMSSMPCCGEKIKIYIEQIVREDFIGLYGFESLEELDMFKLLLSINGVGAKAALSLLSISRLNNLKYAIITGDEKHLCRGTGIGKKIAGRIILELKDKLKSDELLNCIDEFDDVTQDNSLALSEALSALISLGYTEKEAEKVLKDVDKSESVENIIKSALVKLMG</sequence>
<reference key="1">
    <citation type="submission" date="2008-05" db="EMBL/GenBank/DDBJ databases">
        <title>Complete genome sequence of Clostridium botulinum E3 str. Alaska E43.</title>
        <authorList>
            <person name="Brinkac L.M."/>
            <person name="Brown J.L."/>
            <person name="Bruce D."/>
            <person name="Detter C."/>
            <person name="Munk C."/>
            <person name="Smith L.A."/>
            <person name="Smith T.J."/>
            <person name="Sutton G."/>
            <person name="Brettin T.S."/>
        </authorList>
    </citation>
    <scope>NUCLEOTIDE SEQUENCE [LARGE SCALE GENOMIC DNA]</scope>
    <source>
        <strain>Alaska E43 / Type E3</strain>
    </source>
</reference>
<gene>
    <name evidence="1" type="primary">ruvA</name>
    <name type="ordered locus">CLH_0956</name>
</gene>
<protein>
    <recommendedName>
        <fullName evidence="1">Holliday junction branch migration complex subunit RuvA</fullName>
    </recommendedName>
</protein>
<organism>
    <name type="scientific">Clostridium botulinum (strain Alaska E43 / Type E3)</name>
    <dbReference type="NCBI Taxonomy" id="508767"/>
    <lineage>
        <taxon>Bacteria</taxon>
        <taxon>Bacillati</taxon>
        <taxon>Bacillota</taxon>
        <taxon>Clostridia</taxon>
        <taxon>Eubacteriales</taxon>
        <taxon>Clostridiaceae</taxon>
        <taxon>Clostridium</taxon>
    </lineage>
</organism>